<evidence type="ECO:0000250" key="1">
    <source>
        <dbReference type="UniProtKB" id="A0A0P0ZD79"/>
    </source>
</evidence>
<evidence type="ECO:0000250" key="2">
    <source>
        <dbReference type="UniProtKB" id="K2SUY0"/>
    </source>
</evidence>
<evidence type="ECO:0000250" key="3">
    <source>
        <dbReference type="UniProtKB" id="P9WEV7"/>
    </source>
</evidence>
<evidence type="ECO:0000250" key="4">
    <source>
        <dbReference type="UniProtKB" id="Q12051"/>
    </source>
</evidence>
<evidence type="ECO:0000250" key="5">
    <source>
        <dbReference type="UniProtKB" id="Q40577"/>
    </source>
</evidence>
<evidence type="ECO:0000256" key="6">
    <source>
        <dbReference type="SAM" id="MobiDB-lite"/>
    </source>
</evidence>
<evidence type="ECO:0000269" key="7">
    <source>
    </source>
</evidence>
<evidence type="ECO:0000303" key="8">
    <source>
    </source>
</evidence>
<evidence type="ECO:0000305" key="9"/>
<evidence type="ECO:0000305" key="10">
    <source>
    </source>
</evidence>
<gene>
    <name type="ORF">GCG54_00000376</name>
</gene>
<name>CGCS_COLGL</name>
<reference key="1">
    <citation type="journal article" date="2020" name="Phytopathology">
        <title>Genome sequence and comparative analysis of Colletotrichum gloeosporioides isolated from Liriodendron leaves.</title>
        <authorList>
            <person name="Fu F.-F."/>
            <person name="Hao Z."/>
            <person name="Wang P."/>
            <person name="Lu Y."/>
            <person name="Xue L.-J."/>
            <person name="Wei G."/>
            <person name="Tian Y."/>
            <person name="Hu B."/>
            <person name="Xu H."/>
            <person name="Shi J."/>
            <person name="Cheng T."/>
            <person name="Wang G."/>
            <person name="Yi Y."/>
            <person name="Chen J."/>
        </authorList>
    </citation>
    <scope>NUCLEOTIDE SEQUENCE [LARGE SCALE GENOMIC DNA]</scope>
    <source>
        <strain>Lc1</strain>
    </source>
</reference>
<reference key="2">
    <citation type="journal article" date="2022" name="Nature">
        <title>Discovery of non-squalene triterpenes.</title>
        <authorList>
            <person name="Tao H."/>
            <person name="Lauterbach L."/>
            <person name="Bian G."/>
            <person name="Chen R."/>
            <person name="Hou A."/>
            <person name="Mori T."/>
            <person name="Cheng S."/>
            <person name="Hu B."/>
            <person name="Lu L."/>
            <person name="Mu X."/>
            <person name="Li M."/>
            <person name="Adachi N."/>
            <person name="Kawasaki M."/>
            <person name="Moriya T."/>
            <person name="Senda T."/>
            <person name="Wang X."/>
            <person name="Deng Z."/>
            <person name="Abe I."/>
            <person name="Dickschat J.S."/>
            <person name="Liu T."/>
        </authorList>
    </citation>
    <scope>FUNCTION</scope>
    <scope>CATALYTIC ACTIVITY</scope>
</reference>
<accession>A0A8H4CUY8</accession>
<keyword id="KW-0414">Isoprene biosynthesis</keyword>
<keyword id="KW-0456">Lyase</keyword>
<keyword id="KW-0460">Magnesium</keyword>
<keyword id="KW-0479">Metal-binding</keyword>
<keyword id="KW-0511">Multifunctional enzyme</keyword>
<keyword id="KW-1185">Reference proteome</keyword>
<keyword id="KW-0677">Repeat</keyword>
<keyword id="KW-0808">Transferase</keyword>
<proteinExistence type="evidence at protein level"/>
<dbReference type="EC" id="4.2.3.213" evidence="7"/>
<dbReference type="EC" id="2.5.1.158" evidence="7"/>
<dbReference type="EMBL" id="WVTB01000012">
    <property type="protein sequence ID" value="KAF3810331.1"/>
    <property type="molecule type" value="Genomic_DNA"/>
</dbReference>
<dbReference type="RefSeq" id="XP_045269490.1">
    <property type="nucleotide sequence ID" value="XM_045400515.1"/>
</dbReference>
<dbReference type="SMR" id="A0A8H4CUY8"/>
<dbReference type="GeneID" id="69007548"/>
<dbReference type="Proteomes" id="UP000613401">
    <property type="component" value="Unassembled WGS sequence"/>
</dbReference>
<dbReference type="GO" id="GO:0016829">
    <property type="term" value="F:lyase activity"/>
    <property type="evidence" value="ECO:0007669"/>
    <property type="project" value="UniProtKB-KW"/>
</dbReference>
<dbReference type="GO" id="GO:0046872">
    <property type="term" value="F:metal ion binding"/>
    <property type="evidence" value="ECO:0007669"/>
    <property type="project" value="UniProtKB-KW"/>
</dbReference>
<dbReference type="GO" id="GO:0004659">
    <property type="term" value="F:prenyltransferase activity"/>
    <property type="evidence" value="ECO:0007669"/>
    <property type="project" value="InterPro"/>
</dbReference>
<dbReference type="GO" id="GO:0046165">
    <property type="term" value="P:alcohol biosynthetic process"/>
    <property type="evidence" value="ECO:0007669"/>
    <property type="project" value="UniProtKB-ARBA"/>
</dbReference>
<dbReference type="GO" id="GO:0008299">
    <property type="term" value="P:isoprenoid biosynthetic process"/>
    <property type="evidence" value="ECO:0007669"/>
    <property type="project" value="UniProtKB-KW"/>
</dbReference>
<dbReference type="GO" id="GO:0043386">
    <property type="term" value="P:mycotoxin biosynthetic process"/>
    <property type="evidence" value="ECO:0007669"/>
    <property type="project" value="UniProtKB-ARBA"/>
</dbReference>
<dbReference type="CDD" id="cd00685">
    <property type="entry name" value="Trans_IPPS_HT"/>
    <property type="match status" value="1"/>
</dbReference>
<dbReference type="Gene3D" id="1.10.600.10">
    <property type="entry name" value="Farnesyl Diphosphate Synthase"/>
    <property type="match status" value="2"/>
</dbReference>
<dbReference type="InterPro" id="IPR008949">
    <property type="entry name" value="Isoprenoid_synthase_dom_sf"/>
</dbReference>
<dbReference type="InterPro" id="IPR000092">
    <property type="entry name" value="Polyprenyl_synt"/>
</dbReference>
<dbReference type="InterPro" id="IPR033749">
    <property type="entry name" value="Polyprenyl_synt_CS"/>
</dbReference>
<dbReference type="PANTHER" id="PTHR12001">
    <property type="entry name" value="GERANYLGERANYL PYROPHOSPHATE SYNTHASE"/>
    <property type="match status" value="1"/>
</dbReference>
<dbReference type="PANTHER" id="PTHR12001:SF72">
    <property type="entry name" value="THIJ_PFPI FAMILY PROTEIN (AFU_ORTHOLOGUE AFUA_3G01210)-RELATED"/>
    <property type="match status" value="1"/>
</dbReference>
<dbReference type="Pfam" id="PF00348">
    <property type="entry name" value="polyprenyl_synt"/>
    <property type="match status" value="1"/>
</dbReference>
<dbReference type="Pfam" id="PF19086">
    <property type="entry name" value="Terpene_syn_C_2"/>
    <property type="match status" value="1"/>
</dbReference>
<dbReference type="SFLD" id="SFLDS00005">
    <property type="entry name" value="Isoprenoid_Synthase_Type_I"/>
    <property type="match status" value="1"/>
</dbReference>
<dbReference type="SUPFAM" id="SSF48576">
    <property type="entry name" value="Terpenoid synthases"/>
    <property type="match status" value="2"/>
</dbReference>
<dbReference type="PROSITE" id="PS00723">
    <property type="entry name" value="POLYPRENYL_SYNTHASE_1"/>
    <property type="match status" value="1"/>
</dbReference>
<organism>
    <name type="scientific">Colletotrichum gloeosporioides</name>
    <name type="common">Anthracnose fungus</name>
    <name type="synonym">Glomerella cingulata</name>
    <dbReference type="NCBI Taxonomy" id="474922"/>
    <lineage>
        <taxon>Eukaryota</taxon>
        <taxon>Fungi</taxon>
        <taxon>Dikarya</taxon>
        <taxon>Ascomycota</taxon>
        <taxon>Pezizomycotina</taxon>
        <taxon>Sordariomycetes</taxon>
        <taxon>Hypocreomycetidae</taxon>
        <taxon>Glomerellales</taxon>
        <taxon>Glomerellaceae</taxon>
        <taxon>Colletotrichum</taxon>
        <taxon>Colletotrichum gloeosporioides species complex</taxon>
    </lineage>
</organism>
<comment type="function">
    <text evidence="7">Bifunctional terpene synthase that converts dimethylallyl diphosphate (DMAPP) and isopentenyl diphosphate (IPP) into colleterpenol as a single product (PubMed:35650436). The C-terminal prenyltransferase (PT) domain of CgCS catalyzes formation of hexaprenyl diphosphate (HexPP), whereas the N-terminal terpene cyclase (TC) domain catalyzes the cyclization of HexPP to colleterpenol (PubMed:35650436).</text>
</comment>
<comment type="catalytic activity">
    <reaction evidence="7">
        <text>5 isopentenyl diphosphate + dimethylallyl diphosphate = all-trans-hexaprenyl diphosphate + 5 diphosphate</text>
        <dbReference type="Rhea" id="RHEA:77975"/>
        <dbReference type="ChEBI" id="CHEBI:33019"/>
        <dbReference type="ChEBI" id="CHEBI:57623"/>
        <dbReference type="ChEBI" id="CHEBI:58179"/>
        <dbReference type="ChEBI" id="CHEBI:128769"/>
        <dbReference type="EC" id="2.5.1.158"/>
    </reaction>
    <physiologicalReaction direction="left-to-right" evidence="7">
        <dbReference type="Rhea" id="RHEA:77976"/>
    </physiologicalReaction>
</comment>
<comment type="catalytic activity">
    <reaction evidence="7">
        <text>all-trans-hexaprenyl diphosphate + H2O = colleterpenol + diphosphate</text>
        <dbReference type="Rhea" id="RHEA:77979"/>
        <dbReference type="ChEBI" id="CHEBI:15377"/>
        <dbReference type="ChEBI" id="CHEBI:33019"/>
        <dbReference type="ChEBI" id="CHEBI:58179"/>
        <dbReference type="ChEBI" id="CHEBI:192981"/>
        <dbReference type="EC" id="4.2.3.213"/>
    </reaction>
    <physiologicalReaction direction="left-to-right" evidence="7">
        <dbReference type="Rhea" id="RHEA:77980"/>
    </physiologicalReaction>
</comment>
<comment type="cofactor">
    <cofactor evidence="3">
        <name>Mg(2+)</name>
        <dbReference type="ChEBI" id="CHEBI:18420"/>
    </cofactor>
</comment>
<comment type="subunit">
    <text evidence="2">Hexamer.</text>
</comment>
<comment type="domain">
    <text evidence="10">The conserved DDXXD motifs as well as the NSE/DTE motif are important for the catalytic activity, presumably through binding to Mg(2+).</text>
</comment>
<comment type="similarity">
    <text evidence="9">In the N-terminal section; belongs to the terpene synthase family.</text>
</comment>
<comment type="similarity">
    <text evidence="9">In the C-terminal section; belongs to the FPP/GGPP synthase family.</text>
</comment>
<sequence length="760" mass="84699">MPTFAQPVPDDIVASSGLRSKFRPHVHGNYQICVEPSKGMETFYNDAMSTQLESKTLADIPGLGLVHPMALAMANCLPERLPAITRFADFTILNDDYYDIAKRDEIEKVNSDIQNALQDASVPGSKTQSSAGSDKDFKPKQMQAALVLELIMLDQQLAMDIMSSYSQGLDVATFAPDNLRTLDEYLPVRKVNSGLDVTAEMVCFGMGLRISPSDKAKLRPVVDLANFAITVVNDLYSWPKEIKCHLETPGSELPFNAVAVLMRHGGYSEPEAFRILYAKQAELEGEHLRQLDALRAQEGGRLPENQELYVENAQRAVCGSELWSVYTRRYPSKADLRQPEVEFVDGAFRYVADGEGAGEEKVVSESVESLPTTEVEDEFSSSDASPGSVDQAISTPPSTTFCSCEDEEEHIADVKEVCEDEADGVRDMSDISQKSKKKIDTLLPEGPGLTTYASRLEAAPDHAVIAPIKYLATLPSKGVRDTFIDALNWWLEVPEDSLRTIKTIISMLHDSSLILDDIEDDSTLRRGSPAAHMIFGTAQCINAANHIFVMVLAELQKLRSPLKTAILIATEELESLFVGQADDLHWKYHVDCPSTEDYMEMIDNKTGGLFRLCVRLLQAESTRTDVLDLDPRPFVRQLSLFFQIRDDYQNLVSDAYAKQKGFAEDLDEGKISLPIILTLQRARTRPEIMGVLKHKQPGPMAIEMKQYIVREMEKCGALESTRELLQGMQEDLIAELRRLEGDFGAKNATLELVLRRLWIS</sequence>
<protein>
    <recommendedName>
        <fullName evidence="8">Colleterpenol synthase</fullName>
        <shortName evidence="8">CgCS</shortName>
    </recommendedName>
    <domain>
        <recommendedName>
            <fullName evidence="8">Terpene cyclase</fullName>
            <ecNumber evidence="7">4.2.3.213</ecNumber>
        </recommendedName>
    </domain>
    <domain>
        <recommendedName>
            <fullName evidence="8">Hexaprenyl-diphosphate synthase</fullName>
            <shortName evidence="8">HexPP synthase</shortName>
            <ecNumber evidence="7">2.5.1.158</ecNumber>
        </recommendedName>
    </domain>
</protein>
<feature type="chain" id="PRO_0000459745" description="Colleterpenol synthase">
    <location>
        <begin position="1"/>
        <end position="760"/>
    </location>
</feature>
<feature type="region of interest" description="Terpene cyclase" evidence="1">
    <location>
        <begin position="14"/>
        <end position="335"/>
    </location>
</feature>
<feature type="region of interest" description="Prenyltransferase" evidence="1">
    <location>
        <begin position="336"/>
        <end position="759"/>
    </location>
</feature>
<feature type="region of interest" description="Disordered" evidence="6">
    <location>
        <begin position="359"/>
        <end position="400"/>
    </location>
</feature>
<feature type="short sequence motif" description="DDXXD 1" evidence="1">
    <location>
        <begin position="95"/>
        <end position="99"/>
    </location>
</feature>
<feature type="short sequence motif" description="NSE/DTE" evidence="1">
    <location>
        <begin position="233"/>
        <end position="241"/>
    </location>
</feature>
<feature type="short sequence motif" description="DDXXD 2" evidence="1">
    <location>
        <begin position="516"/>
        <end position="520"/>
    </location>
</feature>
<feature type="compositionally biased region" description="Polar residues" evidence="6">
    <location>
        <begin position="391"/>
        <end position="400"/>
    </location>
</feature>
<feature type="binding site" evidence="5">
    <location>
        <position position="95"/>
    </location>
    <ligand>
        <name>Mg(2+)</name>
        <dbReference type="ChEBI" id="CHEBI:18420"/>
        <label>1</label>
    </ligand>
</feature>
<feature type="binding site" evidence="5">
    <location>
        <position position="95"/>
    </location>
    <ligand>
        <name>Mg(2+)</name>
        <dbReference type="ChEBI" id="CHEBI:18420"/>
        <label>2</label>
    </ligand>
</feature>
<feature type="binding site" evidence="4">
    <location>
        <position position="477"/>
    </location>
    <ligand>
        <name>isopentenyl diphosphate</name>
        <dbReference type="ChEBI" id="CHEBI:128769"/>
    </ligand>
</feature>
<feature type="binding site" evidence="4">
    <location>
        <position position="480"/>
    </location>
    <ligand>
        <name>isopentenyl diphosphate</name>
        <dbReference type="ChEBI" id="CHEBI:128769"/>
    </ligand>
</feature>
<feature type="binding site" evidence="4">
    <location>
        <position position="509"/>
    </location>
    <ligand>
        <name>isopentenyl diphosphate</name>
        <dbReference type="ChEBI" id="CHEBI:128769"/>
    </ligand>
</feature>
<feature type="binding site" evidence="4">
    <location>
        <position position="516"/>
    </location>
    <ligand>
        <name>Mg(2+)</name>
        <dbReference type="ChEBI" id="CHEBI:18420"/>
        <label>3</label>
    </ligand>
</feature>
<feature type="binding site" evidence="4">
    <location>
        <position position="516"/>
    </location>
    <ligand>
        <name>Mg(2+)</name>
        <dbReference type="ChEBI" id="CHEBI:18420"/>
        <label>4</label>
    </ligand>
</feature>
<feature type="binding site" evidence="4">
    <location>
        <position position="520"/>
    </location>
    <ligand>
        <name>Mg(2+)</name>
        <dbReference type="ChEBI" id="CHEBI:18420"/>
        <label>3</label>
    </ligand>
</feature>
<feature type="binding site" evidence="4">
    <location>
        <position position="520"/>
    </location>
    <ligand>
        <name>Mg(2+)</name>
        <dbReference type="ChEBI" id="CHEBI:18420"/>
        <label>4</label>
    </ligand>
</feature>
<feature type="binding site" evidence="4">
    <location>
        <position position="525"/>
    </location>
    <ligand>
        <name>dimethylallyl diphosphate</name>
        <dbReference type="ChEBI" id="CHEBI:57623"/>
    </ligand>
</feature>
<feature type="binding site" evidence="4">
    <location>
        <position position="526"/>
    </location>
    <ligand>
        <name>isopentenyl diphosphate</name>
        <dbReference type="ChEBI" id="CHEBI:128769"/>
    </ligand>
</feature>
<feature type="binding site" evidence="4">
    <location>
        <position position="605"/>
    </location>
    <ligand>
        <name>dimethylallyl diphosphate</name>
        <dbReference type="ChEBI" id="CHEBI:57623"/>
    </ligand>
</feature>
<feature type="binding site" evidence="4">
    <location>
        <position position="606"/>
    </location>
    <ligand>
        <name>dimethylallyl diphosphate</name>
        <dbReference type="ChEBI" id="CHEBI:57623"/>
    </ligand>
</feature>
<feature type="binding site" evidence="4">
    <location>
        <position position="643"/>
    </location>
    <ligand>
        <name>dimethylallyl diphosphate</name>
        <dbReference type="ChEBI" id="CHEBI:57623"/>
    </ligand>
</feature>
<feature type="binding site" evidence="4">
    <location>
        <position position="650"/>
    </location>
    <ligand>
        <name>dimethylallyl diphosphate</name>
        <dbReference type="ChEBI" id="CHEBI:57623"/>
    </ligand>
</feature>
<feature type="binding site" evidence="4">
    <location>
        <position position="660"/>
    </location>
    <ligand>
        <name>dimethylallyl diphosphate</name>
        <dbReference type="ChEBI" id="CHEBI:57623"/>
    </ligand>
</feature>
<feature type="binding site" evidence="4">
    <location>
        <position position="670"/>
    </location>
    <ligand>
        <name>dimethylallyl diphosphate</name>
        <dbReference type="ChEBI" id="CHEBI:57623"/>
    </ligand>
</feature>